<dbReference type="EC" id="2.3.1.234" evidence="1"/>
<dbReference type="EMBL" id="CP000814">
    <property type="protein sequence ID" value="ABV52859.1"/>
    <property type="molecule type" value="Genomic_DNA"/>
</dbReference>
<dbReference type="RefSeq" id="WP_002892992.1">
    <property type="nucleotide sequence ID" value="NC_009839.1"/>
</dbReference>
<dbReference type="SMR" id="A8FN22"/>
<dbReference type="KEGG" id="cju:C8J_1260"/>
<dbReference type="HOGENOM" id="CLU_023208_0_3_7"/>
<dbReference type="GO" id="GO:0005737">
    <property type="term" value="C:cytoplasm"/>
    <property type="evidence" value="ECO:0007669"/>
    <property type="project" value="UniProtKB-SubCell"/>
</dbReference>
<dbReference type="GO" id="GO:0005506">
    <property type="term" value="F:iron ion binding"/>
    <property type="evidence" value="ECO:0007669"/>
    <property type="project" value="UniProtKB-UniRule"/>
</dbReference>
<dbReference type="GO" id="GO:0061711">
    <property type="term" value="F:N(6)-L-threonylcarbamoyladenine synthase activity"/>
    <property type="evidence" value="ECO:0007669"/>
    <property type="project" value="UniProtKB-EC"/>
</dbReference>
<dbReference type="GO" id="GO:0002949">
    <property type="term" value="P:tRNA threonylcarbamoyladenosine modification"/>
    <property type="evidence" value="ECO:0007669"/>
    <property type="project" value="UniProtKB-UniRule"/>
</dbReference>
<dbReference type="Gene3D" id="3.30.420.40">
    <property type="match status" value="2"/>
</dbReference>
<dbReference type="HAMAP" id="MF_01445">
    <property type="entry name" value="TsaD"/>
    <property type="match status" value="1"/>
</dbReference>
<dbReference type="InterPro" id="IPR043129">
    <property type="entry name" value="ATPase_NBD"/>
</dbReference>
<dbReference type="InterPro" id="IPR000905">
    <property type="entry name" value="Gcp-like_dom"/>
</dbReference>
<dbReference type="InterPro" id="IPR017861">
    <property type="entry name" value="KAE1/TsaD"/>
</dbReference>
<dbReference type="InterPro" id="IPR017860">
    <property type="entry name" value="Peptidase_M22_CS"/>
</dbReference>
<dbReference type="InterPro" id="IPR022450">
    <property type="entry name" value="TsaD"/>
</dbReference>
<dbReference type="NCBIfam" id="TIGR00329">
    <property type="entry name" value="gcp_kae1"/>
    <property type="match status" value="1"/>
</dbReference>
<dbReference type="NCBIfam" id="TIGR03723">
    <property type="entry name" value="T6A_TsaD_YgjD"/>
    <property type="match status" value="1"/>
</dbReference>
<dbReference type="PANTHER" id="PTHR11735">
    <property type="entry name" value="TRNA N6-ADENOSINE THREONYLCARBAMOYLTRANSFERASE"/>
    <property type="match status" value="1"/>
</dbReference>
<dbReference type="PANTHER" id="PTHR11735:SF6">
    <property type="entry name" value="TRNA N6-ADENOSINE THREONYLCARBAMOYLTRANSFERASE, MITOCHONDRIAL"/>
    <property type="match status" value="1"/>
</dbReference>
<dbReference type="Pfam" id="PF00814">
    <property type="entry name" value="TsaD"/>
    <property type="match status" value="1"/>
</dbReference>
<dbReference type="PRINTS" id="PR00789">
    <property type="entry name" value="OSIALOPTASE"/>
</dbReference>
<dbReference type="SUPFAM" id="SSF53067">
    <property type="entry name" value="Actin-like ATPase domain"/>
    <property type="match status" value="2"/>
</dbReference>
<dbReference type="PROSITE" id="PS01016">
    <property type="entry name" value="GLYCOPROTEASE"/>
    <property type="match status" value="1"/>
</dbReference>
<proteinExistence type="inferred from homology"/>
<organism>
    <name type="scientific">Campylobacter jejuni subsp. jejuni serotype O:6 (strain 81116 / NCTC 11828)</name>
    <dbReference type="NCBI Taxonomy" id="407148"/>
    <lineage>
        <taxon>Bacteria</taxon>
        <taxon>Pseudomonadati</taxon>
        <taxon>Campylobacterota</taxon>
        <taxon>Epsilonproteobacteria</taxon>
        <taxon>Campylobacterales</taxon>
        <taxon>Campylobacteraceae</taxon>
        <taxon>Campylobacter</taxon>
    </lineage>
</organism>
<keyword id="KW-0012">Acyltransferase</keyword>
<keyword id="KW-0963">Cytoplasm</keyword>
<keyword id="KW-0408">Iron</keyword>
<keyword id="KW-0479">Metal-binding</keyword>
<keyword id="KW-0808">Transferase</keyword>
<keyword id="KW-0819">tRNA processing</keyword>
<accession>A8FN22</accession>
<feature type="chain" id="PRO_1000073522" description="tRNA N6-adenosine threonylcarbamoyltransferase">
    <location>
        <begin position="1"/>
        <end position="335"/>
    </location>
</feature>
<feature type="binding site" evidence="1">
    <location>
        <position position="110"/>
    </location>
    <ligand>
        <name>Fe cation</name>
        <dbReference type="ChEBI" id="CHEBI:24875"/>
    </ligand>
</feature>
<feature type="binding site" evidence="1">
    <location>
        <position position="114"/>
    </location>
    <ligand>
        <name>Fe cation</name>
        <dbReference type="ChEBI" id="CHEBI:24875"/>
    </ligand>
</feature>
<feature type="binding site" evidence="1">
    <location>
        <begin position="132"/>
        <end position="136"/>
    </location>
    <ligand>
        <name>substrate</name>
    </ligand>
</feature>
<feature type="binding site" evidence="1">
    <location>
        <position position="165"/>
    </location>
    <ligand>
        <name>substrate</name>
    </ligand>
</feature>
<feature type="binding site" evidence="1">
    <location>
        <position position="178"/>
    </location>
    <ligand>
        <name>substrate</name>
    </ligand>
</feature>
<feature type="binding site" evidence="1">
    <location>
        <position position="271"/>
    </location>
    <ligand>
        <name>substrate</name>
    </ligand>
</feature>
<feature type="binding site" evidence="1">
    <location>
        <position position="299"/>
    </location>
    <ligand>
        <name>Fe cation</name>
        <dbReference type="ChEBI" id="CHEBI:24875"/>
    </ligand>
</feature>
<protein>
    <recommendedName>
        <fullName evidence="1">tRNA N6-adenosine threonylcarbamoyltransferase</fullName>
        <ecNumber evidence="1">2.3.1.234</ecNumber>
    </recommendedName>
    <alternativeName>
        <fullName evidence="1">N6-L-threonylcarbamoyladenine synthase</fullName>
        <shortName evidence="1">t(6)A synthase</shortName>
    </alternativeName>
    <alternativeName>
        <fullName evidence="1">t(6)A37 threonylcarbamoyladenosine biosynthesis protein TsaD</fullName>
    </alternativeName>
    <alternativeName>
        <fullName evidence="1">tRNA threonylcarbamoyladenosine biosynthesis protein TsaD</fullName>
    </alternativeName>
</protein>
<gene>
    <name evidence="1" type="primary">tsaD</name>
    <name type="synonym">gcp</name>
    <name type="ordered locus">C8J_1260</name>
</gene>
<evidence type="ECO:0000255" key="1">
    <source>
        <dbReference type="HAMAP-Rule" id="MF_01445"/>
    </source>
</evidence>
<name>TSAD_CAMJ8</name>
<reference key="1">
    <citation type="journal article" date="2007" name="J. Bacteriol.">
        <title>The complete genome sequence of Campylobacter jejuni strain 81116 (NCTC11828).</title>
        <authorList>
            <person name="Pearson B.M."/>
            <person name="Gaskin D.J.H."/>
            <person name="Segers R.P.A.M."/>
            <person name="Wells J.M."/>
            <person name="Nuijten P.J.M."/>
            <person name="van Vliet A.H.M."/>
        </authorList>
    </citation>
    <scope>NUCLEOTIDE SEQUENCE [LARGE SCALE GENOMIC DNA]</scope>
    <source>
        <strain>81116 / NCTC 11828</strain>
    </source>
</reference>
<sequence>MKNLILAIESSCDDSSIAIIDKNTLECKFHKKISQELDHSIYGGVVPELAARLHSEALPKILKQCKEHFKNLCAIAVTNEPGLSVSLLSGISMAKTLASALNLPLIPINHLKGHIYSLFLEEKISLDMGILLVSGGHTMVLYLKDDANLELLASTNDDSFGESFDKVAKMMNLGYPGGVIIENLAKNAKLKNISFNIPLKHSKELAYSFSGLKNAVRLEILKHENLSDEIKAEIAYAFENTACDHIMDKLEKIFNLYKFKNFGVVGGASANLHLRSRLQNLCQKYNANLKLAPLKFCSDNALMIARAAVDAYKKKEFVSIEEDILSPKNKNFSRI</sequence>
<comment type="function">
    <text evidence="1">Required for the formation of a threonylcarbamoyl group on adenosine at position 37 (t(6)A37) in tRNAs that read codons beginning with adenine. Is involved in the transfer of the threonylcarbamoyl moiety of threonylcarbamoyl-AMP (TC-AMP) to the N6 group of A37, together with TsaE and TsaB. TsaD likely plays a direct catalytic role in this reaction.</text>
</comment>
<comment type="catalytic activity">
    <reaction evidence="1">
        <text>L-threonylcarbamoyladenylate + adenosine(37) in tRNA = N(6)-L-threonylcarbamoyladenosine(37) in tRNA + AMP + H(+)</text>
        <dbReference type="Rhea" id="RHEA:37059"/>
        <dbReference type="Rhea" id="RHEA-COMP:10162"/>
        <dbReference type="Rhea" id="RHEA-COMP:10163"/>
        <dbReference type="ChEBI" id="CHEBI:15378"/>
        <dbReference type="ChEBI" id="CHEBI:73682"/>
        <dbReference type="ChEBI" id="CHEBI:74411"/>
        <dbReference type="ChEBI" id="CHEBI:74418"/>
        <dbReference type="ChEBI" id="CHEBI:456215"/>
        <dbReference type="EC" id="2.3.1.234"/>
    </reaction>
</comment>
<comment type="cofactor">
    <cofactor evidence="1">
        <name>Fe(2+)</name>
        <dbReference type="ChEBI" id="CHEBI:29033"/>
    </cofactor>
    <text evidence="1">Binds 1 Fe(2+) ion per subunit.</text>
</comment>
<comment type="subcellular location">
    <subcellularLocation>
        <location evidence="1">Cytoplasm</location>
    </subcellularLocation>
</comment>
<comment type="similarity">
    <text evidence="1">Belongs to the KAE1 / TsaD family.</text>
</comment>